<dbReference type="EMBL" id="U18466">
    <property type="protein sequence ID" value="AAA65360.1"/>
    <property type="molecule type" value="Genomic_DNA"/>
</dbReference>
<dbReference type="RefSeq" id="NP_042824.1">
    <property type="nucleotide sequence ID" value="NC_001659.2"/>
</dbReference>
<dbReference type="SMR" id="Q65200"/>
<dbReference type="TCDB" id="1.G.23.1.1">
    <property type="family name" value="the african swine fever virus (asfv) fusion protein pe199l (asfv-fp) family"/>
</dbReference>
<dbReference type="iPTMnet" id="Q65200"/>
<dbReference type="GeneID" id="22220360"/>
<dbReference type="KEGG" id="vg:22220360"/>
<dbReference type="Proteomes" id="UP000000624">
    <property type="component" value="Segment"/>
</dbReference>
<dbReference type="GO" id="GO:0033644">
    <property type="term" value="C:host cell membrane"/>
    <property type="evidence" value="ECO:0007669"/>
    <property type="project" value="UniProtKB-SubCell"/>
</dbReference>
<dbReference type="GO" id="GO:0016020">
    <property type="term" value="C:membrane"/>
    <property type="evidence" value="ECO:0007669"/>
    <property type="project" value="UniProtKB-KW"/>
</dbReference>
<dbReference type="GO" id="GO:0039641">
    <property type="term" value="C:viral inner membrane"/>
    <property type="evidence" value="ECO:0007669"/>
    <property type="project" value="UniProtKB-KW"/>
</dbReference>
<dbReference type="GO" id="GO:0055036">
    <property type="term" value="C:virion membrane"/>
    <property type="evidence" value="ECO:0007669"/>
    <property type="project" value="UniProtKB-SubCell"/>
</dbReference>
<dbReference type="GO" id="GO:0019064">
    <property type="term" value="P:fusion of virus membrane with host plasma membrane"/>
    <property type="evidence" value="ECO:0007669"/>
    <property type="project" value="UniProtKB-KW"/>
</dbReference>
<dbReference type="GO" id="GO:0046718">
    <property type="term" value="P:symbiont entry into host cell"/>
    <property type="evidence" value="ECO:0007669"/>
    <property type="project" value="UniProtKB-KW"/>
</dbReference>
<dbReference type="InterPro" id="IPR003472">
    <property type="entry name" value="Virion_mem_poxvirus_L1"/>
</dbReference>
<dbReference type="Pfam" id="PF02442">
    <property type="entry name" value="L1R_F9L"/>
    <property type="match status" value="1"/>
</dbReference>
<accession>Q65200</accession>
<proteinExistence type="evidence at protein level"/>
<evidence type="ECO:0000255" key="1"/>
<evidence type="ECO:0000269" key="2">
    <source>
    </source>
</evidence>
<evidence type="ECO:0000269" key="3">
    <source>
    </source>
</evidence>
<evidence type="ECO:0000305" key="4"/>
<evidence type="ECO:0000305" key="5">
    <source>
    </source>
</evidence>
<evidence type="ECO:0000305" key="6">
    <source>
    </source>
</evidence>
<keyword id="KW-1231">Capsid inner membrane protein</keyword>
<keyword id="KW-1169">Fusion of virus membrane with host cell membrane</keyword>
<keyword id="KW-1168">Fusion of virus membrane with host membrane</keyword>
<keyword id="KW-1043">Host membrane</keyword>
<keyword id="KW-0449">Lipoprotein</keyword>
<keyword id="KW-0472">Membrane</keyword>
<keyword id="KW-0519">Myristate</keyword>
<keyword id="KW-1185">Reference proteome</keyword>
<keyword id="KW-0735">Signal-anchor</keyword>
<keyword id="KW-0812">Transmembrane</keyword>
<keyword id="KW-1133">Transmembrane helix</keyword>
<keyword id="KW-1162">Viral penetration into host cytoplasm</keyword>
<keyword id="KW-0946">Virion</keyword>
<keyword id="KW-1160">Virus entry into host cell</keyword>
<name>E248R_ASFB7</name>
<sequence>MGGSTSKNSFKNTTNIISNSIFNQMQNCISMLDGKNYIGVFGDGNILNHVFQDLNLSLDTSCVQKHVNEENFITNLSNQITQNLKDQEVALTQWMDAGHHDQKTDIEENIKVNLTTTLIQNCVSSLSGMNVLVVKGNGNIVENATQKQSQQIISNCLQGSKQAIDTTTGITNTVNQYSHYTSKNFFDFIADAISAVFKNIMVAAVVIVLIIVGFIAVFYFLHSRHRHEEEEEAEPLISNKVLKNAAVS</sequence>
<organism>
    <name type="scientific">African swine fever virus (strain Badajoz 1971 Vero-adapted)</name>
    <name type="common">Ba71V</name>
    <name type="synonym">ASFV</name>
    <dbReference type="NCBI Taxonomy" id="10498"/>
    <lineage>
        <taxon>Viruses</taxon>
        <taxon>Varidnaviria</taxon>
        <taxon>Bamfordvirae</taxon>
        <taxon>Nucleocytoviricota</taxon>
        <taxon>Pokkesviricetes</taxon>
        <taxon>Asfuvirales</taxon>
        <taxon>Asfarviridae</taxon>
        <taxon>Asfivirus</taxon>
        <taxon>African swine fever virus</taxon>
    </lineage>
</organism>
<reference key="1">
    <citation type="journal article" date="1995" name="Virology">
        <title>Analysis of the complete nucleotide sequence of African swine fever virus.</title>
        <authorList>
            <person name="Yanez R.J."/>
            <person name="Rodriguez J.M."/>
            <person name="Nogal M.L."/>
            <person name="Yuste L."/>
            <person name="Enriquez C."/>
            <person name="Rodriguez J.F."/>
            <person name="Vinuela E."/>
        </authorList>
    </citation>
    <scope>NUCLEOTIDE SEQUENCE [LARGE SCALE GENOMIC DNA]</scope>
</reference>
<reference key="2">
    <citation type="journal article" date="2006" name="J. Virol.">
        <title>African swine fever virus pB119L protein is a flavin adenine dinucleotide-linked sulfhydryl oxidase.</title>
        <authorList>
            <person name="Rodriguez I."/>
            <person name="Redrejo-Rodriguez M."/>
            <person name="Rodriguez J.M."/>
            <person name="Alejo A."/>
            <person name="Salas J."/>
            <person name="Salas M.L."/>
        </authorList>
    </citation>
    <scope>INTERACTION WITH A151R</scope>
</reference>
<reference key="3">
    <citation type="journal article" date="2009" name="J. Virol.">
        <title>The African swine fever virus virion membrane protein pE248R is required for virus infectivity and an early postentry event.</title>
        <authorList>
            <person name="Rodriguez I."/>
            <person name="Nogal M.L."/>
            <person name="Redrejo-Rodriguez M."/>
            <person name="Bustos M.J."/>
            <person name="Salas M.L."/>
        </authorList>
    </citation>
    <scope>SUBCELLULAR LOCATION</scope>
    <scope>FUNCTION</scope>
    <scope>TOPOLOGY</scope>
    <scope>DISULFIDE BOND</scope>
    <scope>MYRISTOYLATION AT GLY-2</scope>
</reference>
<reference key="4">
    <citation type="journal article" date="2018" name="J. Virol.">
        <title>A Proteomic Atlas of the African Swine Fever Virus Particle.</title>
        <authorList>
            <person name="Alejo A."/>
            <person name="Matamoros T."/>
            <person name="Guerra M."/>
            <person name="Andres G."/>
        </authorList>
    </citation>
    <scope>SUBCELLULAR LOCATION</scope>
</reference>
<feature type="initiator methionine" description="Removed" evidence="1">
    <location>
        <position position="1"/>
    </location>
</feature>
<feature type="chain" id="PRO_0000373604" description="Inner membrane protein pE248R">
    <location>
        <begin position="2"/>
        <end position="248"/>
    </location>
</feature>
<feature type="topological domain" description="Cytoplasmic" evidence="3">
    <location>
        <begin position="2"/>
        <end position="199"/>
    </location>
</feature>
<feature type="transmembrane region" description="Helical" evidence="1">
    <location>
        <begin position="200"/>
        <end position="220"/>
    </location>
</feature>
<feature type="topological domain" description="Extracellular" evidence="3">
    <location>
        <begin position="221"/>
        <end position="248"/>
    </location>
</feature>
<feature type="lipid moiety-binding region" description="N-myristoyl glycine; by host" evidence="3">
    <location>
        <position position="2"/>
    </location>
</feature>
<comment type="function">
    <text evidence="3">Essential for viral fusion with host endosomal membrane and core release.</text>
</comment>
<comment type="subunit">
    <text evidence="2">Interacts with A151R.</text>
</comment>
<comment type="subcellular location">
    <subcellularLocation>
        <location evidence="3">Host membrane</location>
        <topology evidence="3">Single-pass type II membrane protein</topology>
    </subcellularLocation>
    <subcellularLocation>
        <location evidence="5 6">Virion membrane</location>
    </subcellularLocation>
    <text evidence="3">Probably part of the virion inner membrane.</text>
</comment>
<comment type="similarity">
    <text evidence="4">Belongs to the asfivirus E248R family.</text>
</comment>
<gene>
    <name type="ordered locus">Ba71V-132</name>
    <name type="ORF">E248R</name>
</gene>
<protein>
    <recommendedName>
        <fullName>Inner membrane protein pE248R</fullName>
        <shortName>pE248R</shortName>
    </recommendedName>
</protein>
<organismHost>
    <name type="scientific">Ornithodoros</name>
    <name type="common">relapsing fever ticks</name>
    <dbReference type="NCBI Taxonomy" id="6937"/>
</organismHost>
<organismHost>
    <name type="scientific">Sus scrofa</name>
    <name type="common">Pig</name>
    <dbReference type="NCBI Taxonomy" id="9823"/>
</organismHost>